<name>RL14_STRZP</name>
<accession>C1CIA7</accession>
<comment type="function">
    <text evidence="1">Binds to 23S rRNA. Forms part of two intersubunit bridges in the 70S ribosome.</text>
</comment>
<comment type="subunit">
    <text evidence="1">Part of the 50S ribosomal subunit. Forms a cluster with proteins L3 and L19. In the 70S ribosome, L14 and L19 interact and together make contacts with the 16S rRNA in bridges B5 and B8.</text>
</comment>
<comment type="similarity">
    <text evidence="1">Belongs to the universal ribosomal protein uL14 family.</text>
</comment>
<gene>
    <name evidence="1" type="primary">rplN</name>
    <name type="ordered locus">SPP_0270</name>
</gene>
<dbReference type="EMBL" id="CP000920">
    <property type="protein sequence ID" value="ACO20446.1"/>
    <property type="molecule type" value="Genomic_DNA"/>
</dbReference>
<dbReference type="RefSeq" id="WP_000616545.1">
    <property type="nucleotide sequence ID" value="NC_012467.1"/>
</dbReference>
<dbReference type="SMR" id="C1CIA7"/>
<dbReference type="GeneID" id="93738967"/>
<dbReference type="KEGG" id="spp:SPP_0270"/>
<dbReference type="HOGENOM" id="CLU_095071_2_1_9"/>
<dbReference type="GO" id="GO:0022625">
    <property type="term" value="C:cytosolic large ribosomal subunit"/>
    <property type="evidence" value="ECO:0007669"/>
    <property type="project" value="TreeGrafter"/>
</dbReference>
<dbReference type="GO" id="GO:0070180">
    <property type="term" value="F:large ribosomal subunit rRNA binding"/>
    <property type="evidence" value="ECO:0007669"/>
    <property type="project" value="TreeGrafter"/>
</dbReference>
<dbReference type="GO" id="GO:0003735">
    <property type="term" value="F:structural constituent of ribosome"/>
    <property type="evidence" value="ECO:0007669"/>
    <property type="project" value="InterPro"/>
</dbReference>
<dbReference type="GO" id="GO:0006412">
    <property type="term" value="P:translation"/>
    <property type="evidence" value="ECO:0007669"/>
    <property type="project" value="UniProtKB-UniRule"/>
</dbReference>
<dbReference type="CDD" id="cd00337">
    <property type="entry name" value="Ribosomal_uL14"/>
    <property type="match status" value="1"/>
</dbReference>
<dbReference type="FunFam" id="2.40.150.20:FF:000001">
    <property type="entry name" value="50S ribosomal protein L14"/>
    <property type="match status" value="1"/>
</dbReference>
<dbReference type="Gene3D" id="2.40.150.20">
    <property type="entry name" value="Ribosomal protein L14"/>
    <property type="match status" value="1"/>
</dbReference>
<dbReference type="HAMAP" id="MF_01367">
    <property type="entry name" value="Ribosomal_uL14"/>
    <property type="match status" value="1"/>
</dbReference>
<dbReference type="InterPro" id="IPR000218">
    <property type="entry name" value="Ribosomal_uL14"/>
</dbReference>
<dbReference type="InterPro" id="IPR005745">
    <property type="entry name" value="Ribosomal_uL14_bac-type"/>
</dbReference>
<dbReference type="InterPro" id="IPR019972">
    <property type="entry name" value="Ribosomal_uL14_CS"/>
</dbReference>
<dbReference type="InterPro" id="IPR036853">
    <property type="entry name" value="Ribosomal_uL14_sf"/>
</dbReference>
<dbReference type="NCBIfam" id="TIGR01067">
    <property type="entry name" value="rplN_bact"/>
    <property type="match status" value="1"/>
</dbReference>
<dbReference type="PANTHER" id="PTHR11761">
    <property type="entry name" value="50S/60S RIBOSOMAL PROTEIN L14/L23"/>
    <property type="match status" value="1"/>
</dbReference>
<dbReference type="PANTHER" id="PTHR11761:SF3">
    <property type="entry name" value="LARGE RIBOSOMAL SUBUNIT PROTEIN UL14M"/>
    <property type="match status" value="1"/>
</dbReference>
<dbReference type="Pfam" id="PF00238">
    <property type="entry name" value="Ribosomal_L14"/>
    <property type="match status" value="1"/>
</dbReference>
<dbReference type="SMART" id="SM01374">
    <property type="entry name" value="Ribosomal_L14"/>
    <property type="match status" value="1"/>
</dbReference>
<dbReference type="SUPFAM" id="SSF50193">
    <property type="entry name" value="Ribosomal protein L14"/>
    <property type="match status" value="1"/>
</dbReference>
<dbReference type="PROSITE" id="PS00049">
    <property type="entry name" value="RIBOSOMAL_L14"/>
    <property type="match status" value="1"/>
</dbReference>
<proteinExistence type="inferred from homology"/>
<organism>
    <name type="scientific">Streptococcus pneumoniae (strain P1031)</name>
    <dbReference type="NCBI Taxonomy" id="488223"/>
    <lineage>
        <taxon>Bacteria</taxon>
        <taxon>Bacillati</taxon>
        <taxon>Bacillota</taxon>
        <taxon>Bacilli</taxon>
        <taxon>Lactobacillales</taxon>
        <taxon>Streptococcaceae</taxon>
        <taxon>Streptococcus</taxon>
    </lineage>
</organism>
<sequence>MIQTETRLKVADNSGAREILTIKVLGGSGRKFANIGDVIVASVKQATPGGAVKKGDVVKAVIVRTKSGARRADGSYIKFDENAAVIIREDKTPRGTRIFGPVARELREGGFMKIVSLAPEVL</sequence>
<protein>
    <recommendedName>
        <fullName evidence="1">Large ribosomal subunit protein uL14</fullName>
    </recommendedName>
    <alternativeName>
        <fullName evidence="2">50S ribosomal protein L14</fullName>
    </alternativeName>
</protein>
<keyword id="KW-0687">Ribonucleoprotein</keyword>
<keyword id="KW-0689">Ribosomal protein</keyword>
<keyword id="KW-0694">RNA-binding</keyword>
<keyword id="KW-0699">rRNA-binding</keyword>
<evidence type="ECO:0000255" key="1">
    <source>
        <dbReference type="HAMAP-Rule" id="MF_01367"/>
    </source>
</evidence>
<evidence type="ECO:0000305" key="2"/>
<feature type="chain" id="PRO_1000166943" description="Large ribosomal subunit protein uL14">
    <location>
        <begin position="1"/>
        <end position="122"/>
    </location>
</feature>
<reference key="1">
    <citation type="journal article" date="2010" name="Genome Biol.">
        <title>Structure and dynamics of the pan-genome of Streptococcus pneumoniae and closely related species.</title>
        <authorList>
            <person name="Donati C."/>
            <person name="Hiller N.L."/>
            <person name="Tettelin H."/>
            <person name="Muzzi A."/>
            <person name="Croucher N.J."/>
            <person name="Angiuoli S.V."/>
            <person name="Oggioni M."/>
            <person name="Dunning Hotopp J.C."/>
            <person name="Hu F.Z."/>
            <person name="Riley D.R."/>
            <person name="Covacci A."/>
            <person name="Mitchell T.J."/>
            <person name="Bentley S.D."/>
            <person name="Kilian M."/>
            <person name="Ehrlich G.D."/>
            <person name="Rappuoli R."/>
            <person name="Moxon E.R."/>
            <person name="Masignani V."/>
        </authorList>
    </citation>
    <scope>NUCLEOTIDE SEQUENCE [LARGE SCALE GENOMIC DNA]</scope>
    <source>
        <strain>P1031</strain>
    </source>
</reference>